<proteinExistence type="inferred from homology"/>
<reference key="1">
    <citation type="journal article" date="2006" name="BMC Genomics">
        <title>Complete genome sequence of Shigella flexneri 5b and comparison with Shigella flexneri 2a.</title>
        <authorList>
            <person name="Nie H."/>
            <person name="Yang F."/>
            <person name="Zhang X."/>
            <person name="Yang J."/>
            <person name="Chen L."/>
            <person name="Wang J."/>
            <person name="Xiong Z."/>
            <person name="Peng J."/>
            <person name="Sun L."/>
            <person name="Dong J."/>
            <person name="Xue Y."/>
            <person name="Xu X."/>
            <person name="Chen S."/>
            <person name="Yao Z."/>
            <person name="Shen Y."/>
            <person name="Jin Q."/>
        </authorList>
    </citation>
    <scope>NUCLEOTIDE SEQUENCE [LARGE SCALE GENOMIC DNA]</scope>
    <source>
        <strain>8401</strain>
    </source>
</reference>
<feature type="chain" id="PRO_1000008101" description="DNA mismatch repair protein MutS">
    <location>
        <begin position="1"/>
        <end position="853"/>
    </location>
</feature>
<feature type="binding site" evidence="1">
    <location>
        <begin position="614"/>
        <end position="621"/>
    </location>
    <ligand>
        <name>ATP</name>
        <dbReference type="ChEBI" id="CHEBI:30616"/>
    </ligand>
</feature>
<organism>
    <name type="scientific">Shigella flexneri serotype 5b (strain 8401)</name>
    <dbReference type="NCBI Taxonomy" id="373384"/>
    <lineage>
        <taxon>Bacteria</taxon>
        <taxon>Pseudomonadati</taxon>
        <taxon>Pseudomonadota</taxon>
        <taxon>Gammaproteobacteria</taxon>
        <taxon>Enterobacterales</taxon>
        <taxon>Enterobacteriaceae</taxon>
        <taxon>Shigella</taxon>
    </lineage>
</organism>
<evidence type="ECO:0000255" key="1">
    <source>
        <dbReference type="HAMAP-Rule" id="MF_00096"/>
    </source>
</evidence>
<gene>
    <name evidence="1" type="primary">mutS</name>
    <name type="ordered locus">SFV_2770</name>
</gene>
<dbReference type="EMBL" id="CP000266">
    <property type="protein sequence ID" value="ABF04855.1"/>
    <property type="molecule type" value="Genomic_DNA"/>
</dbReference>
<dbReference type="RefSeq" id="WP_001272883.1">
    <property type="nucleotide sequence ID" value="NC_008258.1"/>
</dbReference>
<dbReference type="SMR" id="Q0T1G0"/>
<dbReference type="KEGG" id="sfv:SFV_2770"/>
<dbReference type="HOGENOM" id="CLU_002472_4_0_6"/>
<dbReference type="Proteomes" id="UP000000659">
    <property type="component" value="Chromosome"/>
</dbReference>
<dbReference type="GO" id="GO:0005829">
    <property type="term" value="C:cytosol"/>
    <property type="evidence" value="ECO:0007669"/>
    <property type="project" value="TreeGrafter"/>
</dbReference>
<dbReference type="GO" id="GO:0005524">
    <property type="term" value="F:ATP binding"/>
    <property type="evidence" value="ECO:0007669"/>
    <property type="project" value="UniProtKB-UniRule"/>
</dbReference>
<dbReference type="GO" id="GO:0140664">
    <property type="term" value="F:ATP-dependent DNA damage sensor activity"/>
    <property type="evidence" value="ECO:0007669"/>
    <property type="project" value="InterPro"/>
</dbReference>
<dbReference type="GO" id="GO:0003684">
    <property type="term" value="F:damaged DNA binding"/>
    <property type="evidence" value="ECO:0007669"/>
    <property type="project" value="UniProtKB-UniRule"/>
</dbReference>
<dbReference type="GO" id="GO:0030983">
    <property type="term" value="F:mismatched DNA binding"/>
    <property type="evidence" value="ECO:0007669"/>
    <property type="project" value="InterPro"/>
</dbReference>
<dbReference type="GO" id="GO:0006298">
    <property type="term" value="P:mismatch repair"/>
    <property type="evidence" value="ECO:0007669"/>
    <property type="project" value="UniProtKB-UniRule"/>
</dbReference>
<dbReference type="CDD" id="cd03284">
    <property type="entry name" value="ABC_MutS1"/>
    <property type="match status" value="1"/>
</dbReference>
<dbReference type="FunFam" id="1.10.1420.10:FF:000002">
    <property type="entry name" value="DNA mismatch repair protein MutS"/>
    <property type="match status" value="1"/>
</dbReference>
<dbReference type="FunFam" id="3.30.420.110:FF:000001">
    <property type="entry name" value="DNA mismatch repair protein MutS"/>
    <property type="match status" value="1"/>
</dbReference>
<dbReference type="FunFam" id="3.40.1170.10:FF:000001">
    <property type="entry name" value="DNA mismatch repair protein MutS"/>
    <property type="match status" value="1"/>
</dbReference>
<dbReference type="FunFam" id="3.40.50.300:FF:000283">
    <property type="entry name" value="DNA mismatch repair protein MutS"/>
    <property type="match status" value="1"/>
</dbReference>
<dbReference type="Gene3D" id="1.10.1420.10">
    <property type="match status" value="2"/>
</dbReference>
<dbReference type="Gene3D" id="6.10.140.430">
    <property type="match status" value="1"/>
</dbReference>
<dbReference type="Gene3D" id="3.40.1170.10">
    <property type="entry name" value="DNA repair protein MutS, domain I"/>
    <property type="match status" value="1"/>
</dbReference>
<dbReference type="Gene3D" id="3.30.420.110">
    <property type="entry name" value="MutS, connector domain"/>
    <property type="match status" value="1"/>
</dbReference>
<dbReference type="Gene3D" id="3.40.50.300">
    <property type="entry name" value="P-loop containing nucleotide triphosphate hydrolases"/>
    <property type="match status" value="1"/>
</dbReference>
<dbReference type="HAMAP" id="MF_00096">
    <property type="entry name" value="MutS"/>
    <property type="match status" value="1"/>
</dbReference>
<dbReference type="InterPro" id="IPR005748">
    <property type="entry name" value="DNA_mismatch_repair_MutS"/>
</dbReference>
<dbReference type="InterPro" id="IPR007695">
    <property type="entry name" value="DNA_mismatch_repair_MutS-lik_N"/>
</dbReference>
<dbReference type="InterPro" id="IPR017261">
    <property type="entry name" value="DNA_mismatch_repair_MutS/MSH"/>
</dbReference>
<dbReference type="InterPro" id="IPR000432">
    <property type="entry name" value="DNA_mismatch_repair_MutS_C"/>
</dbReference>
<dbReference type="InterPro" id="IPR007861">
    <property type="entry name" value="DNA_mismatch_repair_MutS_clamp"/>
</dbReference>
<dbReference type="InterPro" id="IPR007696">
    <property type="entry name" value="DNA_mismatch_repair_MutS_core"/>
</dbReference>
<dbReference type="InterPro" id="IPR016151">
    <property type="entry name" value="DNA_mismatch_repair_MutS_N"/>
</dbReference>
<dbReference type="InterPro" id="IPR036187">
    <property type="entry name" value="DNA_mismatch_repair_MutS_sf"/>
</dbReference>
<dbReference type="InterPro" id="IPR007860">
    <property type="entry name" value="DNA_mmatch_repair_MutS_con_dom"/>
</dbReference>
<dbReference type="InterPro" id="IPR045076">
    <property type="entry name" value="MutS"/>
</dbReference>
<dbReference type="InterPro" id="IPR036678">
    <property type="entry name" value="MutS_con_dom_sf"/>
</dbReference>
<dbReference type="InterPro" id="IPR027417">
    <property type="entry name" value="P-loop_NTPase"/>
</dbReference>
<dbReference type="NCBIfam" id="TIGR01070">
    <property type="entry name" value="mutS1"/>
    <property type="match status" value="1"/>
</dbReference>
<dbReference type="NCBIfam" id="NF003810">
    <property type="entry name" value="PRK05399.1"/>
    <property type="match status" value="1"/>
</dbReference>
<dbReference type="PANTHER" id="PTHR11361:SF34">
    <property type="entry name" value="DNA MISMATCH REPAIR PROTEIN MSH1, MITOCHONDRIAL"/>
    <property type="match status" value="1"/>
</dbReference>
<dbReference type="PANTHER" id="PTHR11361">
    <property type="entry name" value="DNA MISMATCH REPAIR PROTEIN MUTS FAMILY MEMBER"/>
    <property type="match status" value="1"/>
</dbReference>
<dbReference type="Pfam" id="PF01624">
    <property type="entry name" value="MutS_I"/>
    <property type="match status" value="1"/>
</dbReference>
<dbReference type="Pfam" id="PF05188">
    <property type="entry name" value="MutS_II"/>
    <property type="match status" value="1"/>
</dbReference>
<dbReference type="Pfam" id="PF05192">
    <property type="entry name" value="MutS_III"/>
    <property type="match status" value="1"/>
</dbReference>
<dbReference type="Pfam" id="PF05190">
    <property type="entry name" value="MutS_IV"/>
    <property type="match status" value="1"/>
</dbReference>
<dbReference type="Pfam" id="PF00488">
    <property type="entry name" value="MutS_V"/>
    <property type="match status" value="1"/>
</dbReference>
<dbReference type="PIRSF" id="PIRSF037677">
    <property type="entry name" value="DNA_mis_repair_Msh6"/>
    <property type="match status" value="1"/>
</dbReference>
<dbReference type="SMART" id="SM00534">
    <property type="entry name" value="MUTSac"/>
    <property type="match status" value="1"/>
</dbReference>
<dbReference type="SMART" id="SM00533">
    <property type="entry name" value="MUTSd"/>
    <property type="match status" value="1"/>
</dbReference>
<dbReference type="SUPFAM" id="SSF55271">
    <property type="entry name" value="DNA repair protein MutS, domain I"/>
    <property type="match status" value="1"/>
</dbReference>
<dbReference type="SUPFAM" id="SSF53150">
    <property type="entry name" value="DNA repair protein MutS, domain II"/>
    <property type="match status" value="1"/>
</dbReference>
<dbReference type="SUPFAM" id="SSF48334">
    <property type="entry name" value="DNA repair protein MutS, domain III"/>
    <property type="match status" value="1"/>
</dbReference>
<dbReference type="SUPFAM" id="SSF52540">
    <property type="entry name" value="P-loop containing nucleoside triphosphate hydrolases"/>
    <property type="match status" value="1"/>
</dbReference>
<dbReference type="PROSITE" id="PS00486">
    <property type="entry name" value="DNA_MISMATCH_REPAIR_2"/>
    <property type="match status" value="1"/>
</dbReference>
<comment type="function">
    <text evidence="1">This protein is involved in the repair of mismatches in DNA. It is possible that it carries out the mismatch recognition step. This protein has a weak ATPase activity.</text>
</comment>
<comment type="similarity">
    <text evidence="1">Belongs to the DNA mismatch repair MutS family.</text>
</comment>
<name>MUTS_SHIF8</name>
<keyword id="KW-0067">ATP-binding</keyword>
<keyword id="KW-0227">DNA damage</keyword>
<keyword id="KW-0234">DNA repair</keyword>
<keyword id="KW-0238">DNA-binding</keyword>
<keyword id="KW-0547">Nucleotide-binding</keyword>
<protein>
    <recommendedName>
        <fullName evidence="1">DNA mismatch repair protein MutS</fullName>
    </recommendedName>
</protein>
<sequence length="853" mass="95277">MSAIENFDAHTPMMQQYLKLKAQHPEILLFYRMGDFYELFYDDAKRASQLLDISLTKRGASAGEPIPMAGIPYHAVENYLAKLVNQGESVAICEQIGDPATSKGPVERKVVRIVTPGTISDEALLQERQDNLLAAIWQDSKGFGYATLDISSGRFRLSEPADRETMAAELQRSNPAELLYAEDFAEMSLIEGRRGLRRRPLWEFEIDTARQQLNLQFGTRDLVGFGVENAPRGLCAAGCLLQYAKDTQRTTLPHIRSITMEREQDSIIMDAATRRNLEITQNLAGGAENTLASVLDCTVTPMGSRMLKRWLHMPVRDTRVLLERQQTIGALQDFTAELQPVLRQVGDLERILARLALRTARPRDLARMRHAFQQLPELRAQLETVDSAPVQALREKMGEFAELRDLLERAIIDTPPVLVRDGGVIASGYNEELDEWRALADGATDYLERLEVRERERTGLDTLKVGFNAVHGYYIQISRGQSHLAPINYMRRQTLKNAERYIIPELKEYEDKVLTSKGKALALEKQLYEELFDLLLPHLEALQQSASALAELDVLVNLAERAYTLNYTCPTFIDKPGIRITEGRHPVVEQVLNEPFIANPLNLSPQRRMLIITGPNMGGKSTYMRQTALIALMAYIGSYVPAQKVEIGPIDRIFTRVGAADDLASGRSTFMVEMTETANILHNATEYSLVLMDEIGRGTSTYDGLSLAWACAENLANKIKALTLFATHYFELTQLPEKMEGVANVHLDALEHGDTIAFMHSVQDGAASKSYGLAVAALAGVPKEVIKRARQKLRELESISPNAAATQVDGTQMSLLSVPEETSPAVEALENLDPDSLTPRQALEWIYRLKSLV</sequence>
<accession>Q0T1G0</accession>